<reference key="1">
    <citation type="journal article" date="2006" name="PLoS Genet.">
        <title>Secrets of soil survival revealed by the genome sequence of Arthrobacter aurescens TC1.</title>
        <authorList>
            <person name="Mongodin E.F."/>
            <person name="Shapir N."/>
            <person name="Daugherty S.C."/>
            <person name="DeBoy R.T."/>
            <person name="Emerson J.B."/>
            <person name="Shvartzbeyn A."/>
            <person name="Radune D."/>
            <person name="Vamathevan J."/>
            <person name="Riggs F."/>
            <person name="Grinberg V."/>
            <person name="Khouri H.M."/>
            <person name="Wackett L.P."/>
            <person name="Nelson K.E."/>
            <person name="Sadowsky M.J."/>
        </authorList>
    </citation>
    <scope>NUCLEOTIDE SEQUENCE [LARGE SCALE GENOMIC DNA]</scope>
    <source>
        <strain>TC1</strain>
    </source>
</reference>
<organism>
    <name type="scientific">Paenarthrobacter aurescens (strain TC1)</name>
    <dbReference type="NCBI Taxonomy" id="290340"/>
    <lineage>
        <taxon>Bacteria</taxon>
        <taxon>Bacillati</taxon>
        <taxon>Actinomycetota</taxon>
        <taxon>Actinomycetes</taxon>
        <taxon>Micrococcales</taxon>
        <taxon>Micrococcaceae</taxon>
        <taxon>Paenarthrobacter</taxon>
    </lineage>
</organism>
<gene>
    <name evidence="1" type="primary">ureE</name>
    <name type="ordered locus">AAur_0217</name>
</gene>
<dbReference type="EMBL" id="CP000474">
    <property type="protein sequence ID" value="ABM07070.1"/>
    <property type="molecule type" value="Genomic_DNA"/>
</dbReference>
<dbReference type="RefSeq" id="WP_011772986.1">
    <property type="nucleotide sequence ID" value="NC_008711.1"/>
</dbReference>
<dbReference type="SMR" id="A1R1C6"/>
<dbReference type="STRING" id="290340.AAur_0217"/>
<dbReference type="KEGG" id="aau:AAur_0217"/>
<dbReference type="eggNOG" id="COG2371">
    <property type="taxonomic scope" value="Bacteria"/>
</dbReference>
<dbReference type="HOGENOM" id="CLU_093757_3_1_11"/>
<dbReference type="OrthoDB" id="9810882at2"/>
<dbReference type="Proteomes" id="UP000000637">
    <property type="component" value="Chromosome"/>
</dbReference>
<dbReference type="GO" id="GO:0005737">
    <property type="term" value="C:cytoplasm"/>
    <property type="evidence" value="ECO:0007669"/>
    <property type="project" value="UniProtKB-SubCell"/>
</dbReference>
<dbReference type="GO" id="GO:0016151">
    <property type="term" value="F:nickel cation binding"/>
    <property type="evidence" value="ECO:0007669"/>
    <property type="project" value="UniProtKB-UniRule"/>
</dbReference>
<dbReference type="GO" id="GO:0051082">
    <property type="term" value="F:unfolded protein binding"/>
    <property type="evidence" value="ECO:0007669"/>
    <property type="project" value="UniProtKB-UniRule"/>
</dbReference>
<dbReference type="GO" id="GO:0006457">
    <property type="term" value="P:protein folding"/>
    <property type="evidence" value="ECO:0007669"/>
    <property type="project" value="InterPro"/>
</dbReference>
<dbReference type="GO" id="GO:0065003">
    <property type="term" value="P:protein-containing complex assembly"/>
    <property type="evidence" value="ECO:0007669"/>
    <property type="project" value="InterPro"/>
</dbReference>
<dbReference type="GO" id="GO:0019627">
    <property type="term" value="P:urea metabolic process"/>
    <property type="evidence" value="ECO:0007669"/>
    <property type="project" value="InterPro"/>
</dbReference>
<dbReference type="CDD" id="cd00571">
    <property type="entry name" value="UreE"/>
    <property type="match status" value="1"/>
</dbReference>
<dbReference type="Gene3D" id="2.60.260.20">
    <property type="entry name" value="Urease metallochaperone UreE, N-terminal domain"/>
    <property type="match status" value="1"/>
</dbReference>
<dbReference type="Gene3D" id="3.30.70.790">
    <property type="entry name" value="UreE, C-terminal domain"/>
    <property type="match status" value="1"/>
</dbReference>
<dbReference type="HAMAP" id="MF_00822">
    <property type="entry name" value="UreE"/>
    <property type="match status" value="1"/>
</dbReference>
<dbReference type="InterPro" id="IPR012406">
    <property type="entry name" value="UreE"/>
</dbReference>
<dbReference type="InterPro" id="IPR007864">
    <property type="entry name" value="UreE_C_dom"/>
</dbReference>
<dbReference type="InterPro" id="IPR004029">
    <property type="entry name" value="UreE_N"/>
</dbReference>
<dbReference type="InterPro" id="IPR036118">
    <property type="entry name" value="UreE_N_sf"/>
</dbReference>
<dbReference type="NCBIfam" id="NF009757">
    <property type="entry name" value="PRK13261.2-3"/>
    <property type="match status" value="1"/>
</dbReference>
<dbReference type="Pfam" id="PF05194">
    <property type="entry name" value="UreE_C"/>
    <property type="match status" value="1"/>
</dbReference>
<dbReference type="Pfam" id="PF02814">
    <property type="entry name" value="UreE_N"/>
    <property type="match status" value="1"/>
</dbReference>
<dbReference type="PIRSF" id="PIRSF036402">
    <property type="entry name" value="Ureas_acces_UreE"/>
    <property type="match status" value="1"/>
</dbReference>
<dbReference type="SMART" id="SM00988">
    <property type="entry name" value="UreE_N"/>
    <property type="match status" value="1"/>
</dbReference>
<dbReference type="SUPFAM" id="SSF69737">
    <property type="entry name" value="Urease metallochaperone UreE, C-terminal domain"/>
    <property type="match status" value="1"/>
</dbReference>
<dbReference type="SUPFAM" id="SSF69287">
    <property type="entry name" value="Urease metallochaperone UreE, N-terminal domain"/>
    <property type="match status" value="1"/>
</dbReference>
<keyword id="KW-0143">Chaperone</keyword>
<keyword id="KW-0963">Cytoplasm</keyword>
<keyword id="KW-0533">Nickel</keyword>
<keyword id="KW-0996">Nickel insertion</keyword>
<protein>
    <recommendedName>
        <fullName evidence="1">Urease accessory protein UreE</fullName>
    </recommendedName>
</protein>
<accession>A1R1C6</accession>
<proteinExistence type="inferred from homology"/>
<feature type="chain" id="PRO_1000062540" description="Urease accessory protein UreE">
    <location>
        <begin position="1"/>
        <end position="157"/>
    </location>
</feature>
<evidence type="ECO:0000255" key="1">
    <source>
        <dbReference type="HAMAP-Rule" id="MF_00822"/>
    </source>
</evidence>
<name>UREE_PAEAT</name>
<sequence length="157" mass="17612">MIIEKILGNLHQQPDAYASHHKEKVVLPSTLLVKRIQRVTTDHGKELGIRLPAGTGDLRDGDILAIDQHNIIVVSVLPTDVLVIKARTIHEMGVVAHSLGNRHLQAQFFDGSSEYGAEVMVCQYDHTVEDYLKSVGVPYDRQERVMPVPFRHAEHSH</sequence>
<comment type="function">
    <text evidence="1">Involved in urease metallocenter assembly. Binds nickel. Probably functions as a nickel donor during metallocenter assembly.</text>
</comment>
<comment type="subcellular location">
    <subcellularLocation>
        <location evidence="1">Cytoplasm</location>
    </subcellularLocation>
</comment>
<comment type="similarity">
    <text evidence="1">Belongs to the UreE family.</text>
</comment>